<feature type="chain" id="PRO_0000252740" description="Phosphoribosylformylglycinamidine synthase subunit PurQ">
    <location>
        <begin position="1"/>
        <end position="225"/>
    </location>
</feature>
<feature type="domain" description="Glutamine amidotransferase type-1" evidence="1">
    <location>
        <begin position="5"/>
        <end position="225"/>
    </location>
</feature>
<feature type="active site" description="Nucleophile" evidence="1">
    <location>
        <position position="89"/>
    </location>
</feature>
<feature type="active site" evidence="1">
    <location>
        <position position="198"/>
    </location>
</feature>
<feature type="active site" evidence="1">
    <location>
        <position position="200"/>
    </location>
</feature>
<name>PURQ_SYNJA</name>
<comment type="function">
    <text evidence="1">Part of the phosphoribosylformylglycinamidine synthase complex involved in the purines biosynthetic pathway. Catalyzes the ATP-dependent conversion of formylglycinamide ribonucleotide (FGAR) and glutamine to yield formylglycinamidine ribonucleotide (FGAM) and glutamate. The FGAM synthase complex is composed of three subunits. PurQ produces an ammonia molecule by converting glutamine to glutamate. PurL transfers the ammonia molecule to FGAR to form FGAM in an ATP-dependent manner. PurS interacts with PurQ and PurL and is thought to assist in the transfer of the ammonia molecule from PurQ to PurL.</text>
</comment>
<comment type="catalytic activity">
    <reaction evidence="1">
        <text>N(2)-formyl-N(1)-(5-phospho-beta-D-ribosyl)glycinamide + L-glutamine + ATP + H2O = 2-formamido-N(1)-(5-O-phospho-beta-D-ribosyl)acetamidine + L-glutamate + ADP + phosphate + H(+)</text>
        <dbReference type="Rhea" id="RHEA:17129"/>
        <dbReference type="ChEBI" id="CHEBI:15377"/>
        <dbReference type="ChEBI" id="CHEBI:15378"/>
        <dbReference type="ChEBI" id="CHEBI:29985"/>
        <dbReference type="ChEBI" id="CHEBI:30616"/>
        <dbReference type="ChEBI" id="CHEBI:43474"/>
        <dbReference type="ChEBI" id="CHEBI:58359"/>
        <dbReference type="ChEBI" id="CHEBI:147286"/>
        <dbReference type="ChEBI" id="CHEBI:147287"/>
        <dbReference type="ChEBI" id="CHEBI:456216"/>
        <dbReference type="EC" id="6.3.5.3"/>
    </reaction>
</comment>
<comment type="catalytic activity">
    <reaction evidence="1">
        <text>L-glutamine + H2O = L-glutamate + NH4(+)</text>
        <dbReference type="Rhea" id="RHEA:15889"/>
        <dbReference type="ChEBI" id="CHEBI:15377"/>
        <dbReference type="ChEBI" id="CHEBI:28938"/>
        <dbReference type="ChEBI" id="CHEBI:29985"/>
        <dbReference type="ChEBI" id="CHEBI:58359"/>
        <dbReference type="EC" id="3.5.1.2"/>
    </reaction>
</comment>
<comment type="pathway">
    <text evidence="1">Purine metabolism; IMP biosynthesis via de novo pathway; 5-amino-1-(5-phospho-D-ribosyl)imidazole from N(2)-formyl-N(1)-(5-phospho-D-ribosyl)glycinamide: step 1/2.</text>
</comment>
<comment type="subunit">
    <text evidence="1">Part of the FGAM synthase complex composed of 1 PurL, 1 PurQ and 2 PurS subunits.</text>
</comment>
<comment type="subcellular location">
    <subcellularLocation>
        <location evidence="1">Cytoplasm</location>
    </subcellularLocation>
</comment>
<protein>
    <recommendedName>
        <fullName evidence="1">Phosphoribosylformylglycinamidine synthase subunit PurQ</fullName>
        <shortName evidence="1">FGAM synthase</shortName>
        <ecNumber evidence="1">6.3.5.3</ecNumber>
    </recommendedName>
    <alternativeName>
        <fullName evidence="1">Formylglycinamide ribonucleotide amidotransferase subunit I</fullName>
        <shortName evidence="1">FGAR amidotransferase I</shortName>
        <shortName evidence="1">FGAR-AT I</shortName>
    </alternativeName>
    <alternativeName>
        <fullName evidence="1">Glutaminase PurQ</fullName>
        <ecNumber evidence="1">3.5.1.2</ecNumber>
    </alternativeName>
    <alternativeName>
        <fullName evidence="1">Phosphoribosylformylglycinamidine synthase subunit I</fullName>
    </alternativeName>
</protein>
<dbReference type="EC" id="6.3.5.3" evidence="1"/>
<dbReference type="EC" id="3.5.1.2" evidence="1"/>
<dbReference type="EMBL" id="CP000239">
    <property type="protein sequence ID" value="ABC98861.1"/>
    <property type="molecule type" value="Genomic_DNA"/>
</dbReference>
<dbReference type="RefSeq" id="WP_011429544.1">
    <property type="nucleotide sequence ID" value="NC_007775.1"/>
</dbReference>
<dbReference type="SMR" id="Q2JWK2"/>
<dbReference type="STRING" id="321327.CYA_0646"/>
<dbReference type="KEGG" id="cya:CYA_0646"/>
<dbReference type="eggNOG" id="COG0047">
    <property type="taxonomic scope" value="Bacteria"/>
</dbReference>
<dbReference type="HOGENOM" id="CLU_001031_3_1_3"/>
<dbReference type="OrthoDB" id="9804441at2"/>
<dbReference type="UniPathway" id="UPA00074">
    <property type="reaction ID" value="UER00128"/>
</dbReference>
<dbReference type="Proteomes" id="UP000008818">
    <property type="component" value="Chromosome"/>
</dbReference>
<dbReference type="GO" id="GO:0005737">
    <property type="term" value="C:cytoplasm"/>
    <property type="evidence" value="ECO:0007669"/>
    <property type="project" value="UniProtKB-SubCell"/>
</dbReference>
<dbReference type="GO" id="GO:0005524">
    <property type="term" value="F:ATP binding"/>
    <property type="evidence" value="ECO:0007669"/>
    <property type="project" value="UniProtKB-KW"/>
</dbReference>
<dbReference type="GO" id="GO:0004359">
    <property type="term" value="F:glutaminase activity"/>
    <property type="evidence" value="ECO:0007669"/>
    <property type="project" value="UniProtKB-EC"/>
</dbReference>
<dbReference type="GO" id="GO:0004642">
    <property type="term" value="F:phosphoribosylformylglycinamidine synthase activity"/>
    <property type="evidence" value="ECO:0007669"/>
    <property type="project" value="UniProtKB-UniRule"/>
</dbReference>
<dbReference type="GO" id="GO:0006189">
    <property type="term" value="P:'de novo' IMP biosynthetic process"/>
    <property type="evidence" value="ECO:0007669"/>
    <property type="project" value="UniProtKB-UniRule"/>
</dbReference>
<dbReference type="CDD" id="cd01740">
    <property type="entry name" value="GATase1_FGAR_AT"/>
    <property type="match status" value="1"/>
</dbReference>
<dbReference type="Gene3D" id="3.40.50.880">
    <property type="match status" value="1"/>
</dbReference>
<dbReference type="HAMAP" id="MF_00421">
    <property type="entry name" value="PurQ"/>
    <property type="match status" value="1"/>
</dbReference>
<dbReference type="InterPro" id="IPR029062">
    <property type="entry name" value="Class_I_gatase-like"/>
</dbReference>
<dbReference type="InterPro" id="IPR010075">
    <property type="entry name" value="PRibForGlyAmidine_synth_PurQ"/>
</dbReference>
<dbReference type="NCBIfam" id="TIGR01737">
    <property type="entry name" value="FGAM_synth_I"/>
    <property type="match status" value="1"/>
</dbReference>
<dbReference type="NCBIfam" id="NF002957">
    <property type="entry name" value="PRK03619.1"/>
    <property type="match status" value="1"/>
</dbReference>
<dbReference type="PANTHER" id="PTHR47552">
    <property type="entry name" value="PHOSPHORIBOSYLFORMYLGLYCINAMIDINE SYNTHASE SUBUNIT PURQ"/>
    <property type="match status" value="1"/>
</dbReference>
<dbReference type="PANTHER" id="PTHR47552:SF1">
    <property type="entry name" value="PHOSPHORIBOSYLFORMYLGLYCINAMIDINE SYNTHASE SUBUNIT PURQ"/>
    <property type="match status" value="1"/>
</dbReference>
<dbReference type="Pfam" id="PF13507">
    <property type="entry name" value="GATase_5"/>
    <property type="match status" value="1"/>
</dbReference>
<dbReference type="PIRSF" id="PIRSF001586">
    <property type="entry name" value="FGAM_synth_I"/>
    <property type="match status" value="1"/>
</dbReference>
<dbReference type="SMART" id="SM01211">
    <property type="entry name" value="GATase_5"/>
    <property type="match status" value="1"/>
</dbReference>
<dbReference type="SUPFAM" id="SSF52317">
    <property type="entry name" value="Class I glutamine amidotransferase-like"/>
    <property type="match status" value="1"/>
</dbReference>
<dbReference type="PROSITE" id="PS51273">
    <property type="entry name" value="GATASE_TYPE_1"/>
    <property type="match status" value="1"/>
</dbReference>
<gene>
    <name evidence="1" type="primary">purQ</name>
    <name type="ordered locus">CYA_0646</name>
</gene>
<keyword id="KW-0067">ATP-binding</keyword>
<keyword id="KW-0963">Cytoplasm</keyword>
<keyword id="KW-0315">Glutamine amidotransferase</keyword>
<keyword id="KW-0378">Hydrolase</keyword>
<keyword id="KW-0436">Ligase</keyword>
<keyword id="KW-0547">Nucleotide-binding</keyword>
<keyword id="KW-0658">Purine biosynthesis</keyword>
<accession>Q2JWK2</accession>
<reference key="1">
    <citation type="journal article" date="2007" name="ISME J.">
        <title>Population level functional diversity in a microbial community revealed by comparative genomic and metagenomic analyses.</title>
        <authorList>
            <person name="Bhaya D."/>
            <person name="Grossman A.R."/>
            <person name="Steunou A.-S."/>
            <person name="Khuri N."/>
            <person name="Cohan F.M."/>
            <person name="Hamamura N."/>
            <person name="Melendrez M.C."/>
            <person name="Bateson M.M."/>
            <person name="Ward D.M."/>
            <person name="Heidelberg J.F."/>
        </authorList>
    </citation>
    <scope>NUCLEOTIDE SEQUENCE [LARGE SCALE GENOMIC DNA]</scope>
    <source>
        <strain>JA-3-3Ab</strain>
    </source>
</reference>
<proteinExistence type="inferred from homology"/>
<sequence>MAKVRFGIVVFPGSNCDRDVAWVTRGLLGCPTRLIWHRETDLSGLDVVVLPGGFSYGDYLRAGALARFAPVMGSLAEHGARGGYVLGICNGFQILTEAGLLPGALVRNANLHFICDRVGIRVERQDLPWTSAYPCGATLTLPIAHGEGRYVCDADTLKQLQDRGQIVFRYAPVAPNGSVDNIAGICDPSGRILGLMPHPERAADPDLPGQDGIPFWQSIVQSLAG</sequence>
<evidence type="ECO:0000255" key="1">
    <source>
        <dbReference type="HAMAP-Rule" id="MF_00421"/>
    </source>
</evidence>
<organism>
    <name type="scientific">Synechococcus sp. (strain JA-3-3Ab)</name>
    <name type="common">Cyanobacteria bacterium Yellowstone A-Prime</name>
    <dbReference type="NCBI Taxonomy" id="321327"/>
    <lineage>
        <taxon>Bacteria</taxon>
        <taxon>Bacillati</taxon>
        <taxon>Cyanobacteriota</taxon>
        <taxon>Cyanophyceae</taxon>
        <taxon>Synechococcales</taxon>
        <taxon>Synechococcaceae</taxon>
        <taxon>Synechococcus</taxon>
    </lineage>
</organism>